<comment type="function">
    <text evidence="1">Ligates lysine onto the cytidine present at position 34 of the AUA codon-specific tRNA(Ile) that contains the anticodon CAU, in an ATP-dependent manner. Cytidine is converted to lysidine, thus changing the amino acid specificity of the tRNA from methionine to isoleucine.</text>
</comment>
<comment type="catalytic activity">
    <reaction evidence="1">
        <text>cytidine(34) in tRNA(Ile2) + L-lysine + ATP = lysidine(34) in tRNA(Ile2) + AMP + diphosphate + H(+)</text>
        <dbReference type="Rhea" id="RHEA:43744"/>
        <dbReference type="Rhea" id="RHEA-COMP:10625"/>
        <dbReference type="Rhea" id="RHEA-COMP:10670"/>
        <dbReference type="ChEBI" id="CHEBI:15378"/>
        <dbReference type="ChEBI" id="CHEBI:30616"/>
        <dbReference type="ChEBI" id="CHEBI:32551"/>
        <dbReference type="ChEBI" id="CHEBI:33019"/>
        <dbReference type="ChEBI" id="CHEBI:82748"/>
        <dbReference type="ChEBI" id="CHEBI:83665"/>
        <dbReference type="ChEBI" id="CHEBI:456215"/>
        <dbReference type="EC" id="6.3.4.19"/>
    </reaction>
</comment>
<comment type="subcellular location">
    <subcellularLocation>
        <location evidence="1">Cytoplasm</location>
    </subcellularLocation>
</comment>
<comment type="domain">
    <text>The N-terminal region contains the highly conserved SGGXDS motif, predicted to be a P-loop motif involved in ATP binding.</text>
</comment>
<comment type="similarity">
    <text evidence="1">Belongs to the tRNA(Ile)-lysidine synthase family.</text>
</comment>
<sequence length="430" mass="48424">MTTLTLNTSLLSSRRILAAFSGGLDSTVLLHQLVLWRERHPDVTLRAIHIHHGLSPHADSWVRHCETVCERWQVPLVVERVTLADNGLGIEAHAREARYRAFAQTLLPGEVLATAQHLDDQCETFLLALKRGSGPAGLSAMGERSPFAGTLLLRPLLRETRKTLEQWAVRHGLCWIEDESNQDDAYDRNFLRLRALPLLQQRWPHFPAAVARSATLCAEQERLLDELLASDLTDCITAEGTLRLSPLMSMSDVRRAAILRRWLAMRNAPMPSRDALERIWQEVALARDDASPCLRFGDREIRRYQSQLWWIKSVAGQHETTVAWPVWQTPLALPAGLGTVQLVPGGELRRPREEESVSIRFKAPGVLHIVGRNGGRKLKKIWQEQGIPPWRRDTTPLLFYGETLIAAAGVFVTREGAAEDKEGVSLVWHA</sequence>
<evidence type="ECO:0000255" key="1">
    <source>
        <dbReference type="HAMAP-Rule" id="MF_01161"/>
    </source>
</evidence>
<proteinExistence type="inferred from homology"/>
<feature type="chain" id="PRO_1000164331" description="tRNA(Ile)-lysidine synthase">
    <location>
        <begin position="1"/>
        <end position="430"/>
    </location>
</feature>
<feature type="binding site" evidence="1">
    <location>
        <begin position="21"/>
        <end position="26"/>
    </location>
    <ligand>
        <name>ATP</name>
        <dbReference type="ChEBI" id="CHEBI:30616"/>
    </ligand>
</feature>
<reference key="1">
    <citation type="submission" date="2007-11" db="EMBL/GenBank/DDBJ databases">
        <authorList>
            <consortium name="The Salmonella enterica serovar Paratyphi B Genome Sequencing Project"/>
            <person name="McClelland M."/>
            <person name="Sanderson E.K."/>
            <person name="Porwollik S."/>
            <person name="Spieth J."/>
            <person name="Clifton W.S."/>
            <person name="Fulton R."/>
            <person name="Cordes M."/>
            <person name="Wollam A."/>
            <person name="Shah N."/>
            <person name="Pepin K."/>
            <person name="Bhonagiri V."/>
            <person name="Nash W."/>
            <person name="Johnson M."/>
            <person name="Thiruvilangam P."/>
            <person name="Wilson R."/>
        </authorList>
    </citation>
    <scope>NUCLEOTIDE SEQUENCE [LARGE SCALE GENOMIC DNA]</scope>
    <source>
        <strain>ATCC BAA-1250 / SPB7</strain>
    </source>
</reference>
<accession>A9N0U0</accession>
<dbReference type="EC" id="6.3.4.19" evidence="1"/>
<dbReference type="EMBL" id="CP000886">
    <property type="protein sequence ID" value="ABX65742.1"/>
    <property type="molecule type" value="Genomic_DNA"/>
</dbReference>
<dbReference type="RefSeq" id="WP_000210058.1">
    <property type="nucleotide sequence ID" value="NC_010102.1"/>
</dbReference>
<dbReference type="SMR" id="A9N0U0"/>
<dbReference type="KEGG" id="spq:SPAB_00301"/>
<dbReference type="PATRIC" id="fig|1016998.12.peg.288"/>
<dbReference type="HOGENOM" id="CLU_018869_2_0_6"/>
<dbReference type="BioCyc" id="SENT1016998:SPAB_RS01220-MONOMER"/>
<dbReference type="Proteomes" id="UP000008556">
    <property type="component" value="Chromosome"/>
</dbReference>
<dbReference type="GO" id="GO:0005737">
    <property type="term" value="C:cytoplasm"/>
    <property type="evidence" value="ECO:0007669"/>
    <property type="project" value="UniProtKB-SubCell"/>
</dbReference>
<dbReference type="GO" id="GO:0005524">
    <property type="term" value="F:ATP binding"/>
    <property type="evidence" value="ECO:0007669"/>
    <property type="project" value="UniProtKB-UniRule"/>
</dbReference>
<dbReference type="GO" id="GO:0032267">
    <property type="term" value="F:tRNA(Ile)-lysidine synthase activity"/>
    <property type="evidence" value="ECO:0007669"/>
    <property type="project" value="UniProtKB-EC"/>
</dbReference>
<dbReference type="GO" id="GO:0006400">
    <property type="term" value="P:tRNA modification"/>
    <property type="evidence" value="ECO:0007669"/>
    <property type="project" value="UniProtKB-UniRule"/>
</dbReference>
<dbReference type="CDD" id="cd01992">
    <property type="entry name" value="TilS_N"/>
    <property type="match status" value="1"/>
</dbReference>
<dbReference type="FunFam" id="3.40.50.620:FF:000173">
    <property type="entry name" value="tRNA(Ile)-lysidine synthase"/>
    <property type="match status" value="1"/>
</dbReference>
<dbReference type="Gene3D" id="1.20.59.20">
    <property type="match status" value="1"/>
</dbReference>
<dbReference type="Gene3D" id="3.40.50.620">
    <property type="entry name" value="HUPs"/>
    <property type="match status" value="1"/>
</dbReference>
<dbReference type="HAMAP" id="MF_01161">
    <property type="entry name" value="tRNA_Ile_lys_synt"/>
    <property type="match status" value="1"/>
</dbReference>
<dbReference type="InterPro" id="IPR012796">
    <property type="entry name" value="Lysidine-tRNA-synth_C"/>
</dbReference>
<dbReference type="InterPro" id="IPR014729">
    <property type="entry name" value="Rossmann-like_a/b/a_fold"/>
</dbReference>
<dbReference type="InterPro" id="IPR011063">
    <property type="entry name" value="TilS/TtcA_N"/>
</dbReference>
<dbReference type="InterPro" id="IPR012094">
    <property type="entry name" value="tRNA_Ile_lys_synt"/>
</dbReference>
<dbReference type="InterPro" id="IPR012795">
    <property type="entry name" value="tRNA_Ile_lys_synt_N"/>
</dbReference>
<dbReference type="InterPro" id="IPR015262">
    <property type="entry name" value="tRNA_Ile_lys_synt_subst-bd"/>
</dbReference>
<dbReference type="NCBIfam" id="TIGR02433">
    <property type="entry name" value="lysidine_TilS_C"/>
    <property type="match status" value="1"/>
</dbReference>
<dbReference type="NCBIfam" id="TIGR02432">
    <property type="entry name" value="lysidine_TilS_N"/>
    <property type="match status" value="1"/>
</dbReference>
<dbReference type="NCBIfam" id="NF007942">
    <property type="entry name" value="PRK10660.1"/>
    <property type="match status" value="1"/>
</dbReference>
<dbReference type="PANTHER" id="PTHR43033">
    <property type="entry name" value="TRNA(ILE)-LYSIDINE SYNTHASE-RELATED"/>
    <property type="match status" value="1"/>
</dbReference>
<dbReference type="PANTHER" id="PTHR43033:SF1">
    <property type="entry name" value="TRNA(ILE)-LYSIDINE SYNTHASE-RELATED"/>
    <property type="match status" value="1"/>
</dbReference>
<dbReference type="Pfam" id="PF01171">
    <property type="entry name" value="ATP_bind_3"/>
    <property type="match status" value="1"/>
</dbReference>
<dbReference type="Pfam" id="PF09179">
    <property type="entry name" value="TilS"/>
    <property type="match status" value="1"/>
</dbReference>
<dbReference type="Pfam" id="PF11734">
    <property type="entry name" value="TilS_C"/>
    <property type="match status" value="1"/>
</dbReference>
<dbReference type="SMART" id="SM00977">
    <property type="entry name" value="TilS_C"/>
    <property type="match status" value="1"/>
</dbReference>
<dbReference type="SUPFAM" id="SSF52402">
    <property type="entry name" value="Adenine nucleotide alpha hydrolases-like"/>
    <property type="match status" value="1"/>
</dbReference>
<dbReference type="SUPFAM" id="SSF82829">
    <property type="entry name" value="MesJ substrate recognition domain-like"/>
    <property type="match status" value="1"/>
</dbReference>
<dbReference type="SUPFAM" id="SSF56037">
    <property type="entry name" value="PheT/TilS domain"/>
    <property type="match status" value="1"/>
</dbReference>
<keyword id="KW-0067">ATP-binding</keyword>
<keyword id="KW-0963">Cytoplasm</keyword>
<keyword id="KW-0436">Ligase</keyword>
<keyword id="KW-0547">Nucleotide-binding</keyword>
<keyword id="KW-0819">tRNA processing</keyword>
<organism>
    <name type="scientific">Salmonella paratyphi B (strain ATCC BAA-1250 / SPB7)</name>
    <dbReference type="NCBI Taxonomy" id="1016998"/>
    <lineage>
        <taxon>Bacteria</taxon>
        <taxon>Pseudomonadati</taxon>
        <taxon>Pseudomonadota</taxon>
        <taxon>Gammaproteobacteria</taxon>
        <taxon>Enterobacterales</taxon>
        <taxon>Enterobacteriaceae</taxon>
        <taxon>Salmonella</taxon>
    </lineage>
</organism>
<name>TILS_SALPB</name>
<gene>
    <name evidence="1" type="primary">tilS</name>
    <name type="ordered locus">SPAB_00301</name>
</gene>
<protein>
    <recommendedName>
        <fullName evidence="1">tRNA(Ile)-lysidine synthase</fullName>
        <ecNumber evidence="1">6.3.4.19</ecNumber>
    </recommendedName>
    <alternativeName>
        <fullName evidence="1">tRNA(Ile)-2-lysyl-cytidine synthase</fullName>
    </alternativeName>
    <alternativeName>
        <fullName evidence="1">tRNA(Ile)-lysidine synthetase</fullName>
    </alternativeName>
</protein>